<gene>
    <name evidence="1" type="primary">rplL</name>
    <name type="ordered locus">TTHA0210</name>
</gene>
<organism>
    <name type="scientific">Thermus thermophilus (strain ATCC 27634 / DSM 579 / HB8)</name>
    <dbReference type="NCBI Taxonomy" id="300852"/>
    <lineage>
        <taxon>Bacteria</taxon>
        <taxon>Thermotogati</taxon>
        <taxon>Deinococcota</taxon>
        <taxon>Deinococci</taxon>
        <taxon>Thermales</taxon>
        <taxon>Thermaceae</taxon>
        <taxon>Thermus</taxon>
    </lineage>
</organism>
<proteinExistence type="evidence at protein level"/>
<name>RL7_THET8</name>
<keyword id="KW-0002">3D-structure</keyword>
<keyword id="KW-0903">Direct protein sequencing</keyword>
<keyword id="KW-0597">Phosphoprotein</keyword>
<keyword id="KW-1185">Reference proteome</keyword>
<keyword id="KW-0687">Ribonucleoprotein</keyword>
<keyword id="KW-0689">Ribosomal protein</keyword>
<accession>Q8VVE2</accession>
<accession>Q5SLT3</accession>
<feature type="initiator methionine" description="Removed" evidence="2">
    <location>
        <position position="1"/>
    </location>
</feature>
<feature type="chain" id="PRO_0000157597" description="Large ribosomal subunit protein bL12">
    <location>
        <begin position="2"/>
        <end position="125"/>
    </location>
</feature>
<feature type="sequence conflict" description="In Ref. 1; CAD11987." evidence="5" ref="1">
    <original>EL</original>
    <variation>DV</variation>
    <location>
        <begin position="77"/>
        <end position="78"/>
    </location>
</feature>
<feature type="turn" evidence="6">
    <location>
        <begin position="2"/>
        <end position="7"/>
    </location>
</feature>
<feature type="helix" evidence="6">
    <location>
        <begin position="9"/>
        <end position="13"/>
    </location>
</feature>
<feature type="turn" evidence="6">
    <location>
        <begin position="14"/>
        <end position="16"/>
    </location>
</feature>
<feature type="helix" evidence="6">
    <location>
        <begin position="17"/>
        <end position="22"/>
    </location>
</feature>
<feature type="turn" evidence="6">
    <location>
        <begin position="25"/>
        <end position="27"/>
    </location>
</feature>
<reference key="1">
    <citation type="submission" date="2001-11" db="EMBL/GenBank/DDBJ databases">
        <title>Ribosomal protein L12 and L10 from Thermus thermophilus, dissertation.</title>
        <authorList>
            <person name="Huang Y."/>
            <person name="Sprinzl M."/>
        </authorList>
    </citation>
    <scope>NUCLEOTIDE SEQUENCE [GENOMIC DNA]</scope>
</reference>
<reference key="2">
    <citation type="submission" date="2004-11" db="EMBL/GenBank/DDBJ databases">
        <title>Complete genome sequence of Thermus thermophilus HB8.</title>
        <authorList>
            <person name="Masui R."/>
            <person name="Kurokawa K."/>
            <person name="Nakagawa N."/>
            <person name="Tokunaga F."/>
            <person name="Koyama Y."/>
            <person name="Shibata T."/>
            <person name="Oshima T."/>
            <person name="Yokoyama S."/>
            <person name="Yasunaga T."/>
            <person name="Kuramitsu S."/>
        </authorList>
    </citation>
    <scope>NUCLEOTIDE SEQUENCE [LARGE SCALE GENOMIC DNA]</scope>
    <source>
        <strain>ATCC 27634 / DSM 579 / HB8</strain>
    </source>
</reference>
<reference key="3">
    <citation type="journal article" date="2000" name="Biol. Chem.">
        <title>Identification of the 50S ribosomal proteins from the eubacterium Thermus thermophilus.</title>
        <authorList>
            <person name="Katsani K.R."/>
            <person name="Tsiboli P."/>
            <person name="Anagnostopoulos K."/>
            <person name="Urlaub H."/>
            <person name="Choli-Papadopoulou T."/>
        </authorList>
    </citation>
    <scope>PROTEIN SEQUENCE OF 2-30</scope>
</reference>
<reference key="4">
    <citation type="journal article" date="2005" name="Proc. Natl. Acad. Sci. U.S.A.">
        <title>Heptameric (L12)6/L10 rather than canonical pentameric complexes are found by tandem MS of intact ribosomes from thermophilic bacteria.</title>
        <authorList>
            <person name="Ilag L.L."/>
            <person name="Videler H."/>
            <person name="McKay A.R."/>
            <person name="Sobott F."/>
            <person name="Fucini P."/>
            <person name="Nierhaus K.H."/>
            <person name="Robinson C.V."/>
        </authorList>
    </citation>
    <scope>SUBUNIT</scope>
    <scope>STOICHIOMETRY</scope>
    <scope>PHOSPHORYLATION</scope>
    <scope>MASS SPECTROMETRY</scope>
</reference>
<reference key="5">
    <citation type="journal article" date="2005" name="Proteomics">
        <title>Extending ribosomal protein identifications to unsequenced bacterial strains using matrix-assisted laser desorption/ionization mass spectrometry.</title>
        <authorList>
            <person name="Suh M.-J."/>
            <person name="Hamburg D.M."/>
            <person name="Gregory S.T."/>
            <person name="Dahlberg A.E."/>
            <person name="Limbach P.A."/>
        </authorList>
    </citation>
    <scope>MASS SPECTROMETRY</scope>
</reference>
<reference key="6">
    <citation type="journal article" date="2001" name="Cell">
        <title>The path of messenger RNA through the ribosome.</title>
        <authorList>
            <person name="Yusupova G.Z."/>
            <person name="Yusupov M.M."/>
            <person name="Cate J.H.D."/>
            <person name="Noller H.F."/>
        </authorList>
    </citation>
    <scope>X-RAY CRYSTALLOGRAPHY (5.0 ANGSTROMS) OF THE RIBOSOME</scope>
</reference>
<reference key="7">
    <citation type="journal article" date="2001" name="Science">
        <title>Crystal structure of the ribosome at 5.5 A resolution.</title>
        <authorList>
            <person name="Yusupov M.M."/>
            <person name="Yusupova G.Z."/>
            <person name="Baucom A."/>
            <person name="Lieberman K."/>
            <person name="Earnest T.N."/>
            <person name="Cate J.H.D."/>
            <person name="Noller H.F."/>
        </authorList>
    </citation>
    <scope>X-RAY CRYSTALLOGRAPHY (5.5 ANGSTROMS) OF THE RIBOSOME</scope>
</reference>
<comment type="function">
    <text>Forms part of the ribosomal stalk which helps the ribosome interact with GTP-bound translation factors. Is thus essential for accurate translation. It extends beyond the surface of the 70S ribosome. The stalk is preferentially stabilized in 70S versus 50S crystals.</text>
</comment>
<comment type="subunit">
    <text evidence="3">Homodimer. Part of the 50S ribosomal subunit; present in 6 copies per ribosome. Forms part of the ribosomal stalk which helps the ribosome interact with GTP-bound translation factors. Forms a heptameric L10(L12)2(L12)2(L12)2 complex, where L10 forms an elongated spine to which 3 L12 dimers bind in a sequential fashion. Contacts protein L11.</text>
</comment>
<comment type="PTM">
    <text evidence="3">The ion at m/z 13016 is probably phosphorylated; treatment with phosphatase in the presence of kinase inhibitors decreases it weight. This form is only detected on 70S ribosomes and not in isolated ribosomal stalk complexes.</text>
</comment>
<comment type="PTM">
    <text>The ion at m/z 12978 is suggested to be the N-acetylated form of the protein (L7). The ion at m/z 12964 is suggested to be consistent with dimethylation or formylation and is present in very small quantities in the sample.</text>
</comment>
<comment type="mass spectrometry" mass="96075.0" error="13.0" method="Electrospray" evidence="3">
    <text>Isolated L10(L12)6.</text>
</comment>
<comment type="mass spectrometry" mass="77670.0" error="9.0" method="Electrospray" evidence="3">
    <text>Isolated (L12)6.</text>
</comment>
<comment type="mass spectrometry" mass="13016.0" error="1.9" method="Electrospray" evidence="3">
    <text>Probably phosphorylated, more strongly associated with the 50S ribosomal subunit.</text>
</comment>
<comment type="mass spectrometry" mass="12936.0" error="0.5" method="Electrospray" evidence="3">
    <text>Not phosphorylated.</text>
</comment>
<comment type="mass spectrometry" mass="12937.0" method="MALDI" evidence="4"/>
<comment type="mass spectrometry" mass="12964.0" method="MALDI" evidence="4">
    <text>May be N-acetylated.</text>
</comment>
<comment type="mass spectrometry" mass="12978.0" method="MALDI" evidence="4">
    <text>May be dimethylated or formylated.</text>
</comment>
<comment type="similarity">
    <text evidence="1">Belongs to the bacterial ribosomal protein bL12 family.</text>
</comment>
<protein>
    <recommendedName>
        <fullName evidence="1">Large ribosomal subunit protein bL12</fullName>
    </recommendedName>
    <alternativeName>
        <fullName evidence="5">50S ribosomal protein L7/L12</fullName>
    </alternativeName>
</protein>
<sequence length="125" mass="13067">MALDIERIKEELSQATVLELKQLIDALKEAWGVTAAAPVAVAAAPAAGAAAAPAEEKTEFDVILKEAGAKKLEVIKELRAITGLGLKEAKDLAEKGGPVKEGVSKQEAEEIKKKLEAVGAVVELK</sequence>
<evidence type="ECO:0000255" key="1">
    <source>
        <dbReference type="HAMAP-Rule" id="MF_00368"/>
    </source>
</evidence>
<evidence type="ECO:0000269" key="2">
    <source>
    </source>
</evidence>
<evidence type="ECO:0000269" key="3">
    <source>
    </source>
</evidence>
<evidence type="ECO:0000269" key="4">
    <source>
    </source>
</evidence>
<evidence type="ECO:0000305" key="5"/>
<evidence type="ECO:0007829" key="6">
    <source>
        <dbReference type="PDB" id="4V6F"/>
    </source>
</evidence>
<dbReference type="EMBL" id="AJ419825">
    <property type="protein sequence ID" value="CAD11987.1"/>
    <property type="molecule type" value="Genomic_DNA"/>
</dbReference>
<dbReference type="EMBL" id="AP008226">
    <property type="protein sequence ID" value="BAD70033.1"/>
    <property type="molecule type" value="Genomic_DNA"/>
</dbReference>
<dbReference type="RefSeq" id="WP_008630582.1">
    <property type="nucleotide sequence ID" value="NC_006461.1"/>
</dbReference>
<dbReference type="RefSeq" id="YP_143476.1">
    <property type="nucleotide sequence ID" value="NC_006461.1"/>
</dbReference>
<dbReference type="PDB" id="4V42">
    <property type="method" value="X-ray"/>
    <property type="resolution" value="5.50 A"/>
    <property type="chains" value="BI/BJ=32-125"/>
</dbReference>
<dbReference type="PDB" id="4V4P">
    <property type="method" value="X-ray"/>
    <property type="resolution" value="5.50 A"/>
    <property type="chains" value="I/J=32-125"/>
</dbReference>
<dbReference type="PDB" id="4V51">
    <property type="method" value="X-ray"/>
    <property type="resolution" value="2.80 A"/>
    <property type="chains" value="L/M=2-125"/>
</dbReference>
<dbReference type="PDB" id="4V6F">
    <property type="method" value="X-ray"/>
    <property type="resolution" value="3.10 A"/>
    <property type="chains" value="DI/DJ=1-125"/>
</dbReference>
<dbReference type="PDB" id="6GSL">
    <property type="method" value="X-ray"/>
    <property type="resolution" value="3.16 A"/>
    <property type="chains" value="18/28=1-125"/>
</dbReference>
<dbReference type="PDBsum" id="4V42"/>
<dbReference type="PDBsum" id="4V4P"/>
<dbReference type="PDBsum" id="4V51"/>
<dbReference type="PDBsum" id="4V6F"/>
<dbReference type="PDBsum" id="6GSL"/>
<dbReference type="SMR" id="Q8VVE2"/>
<dbReference type="IntAct" id="Q8VVE2">
    <property type="interactions" value="1"/>
</dbReference>
<dbReference type="EnsemblBacteria" id="BAD70033">
    <property type="protein sequence ID" value="BAD70033"/>
    <property type="gene ID" value="BAD70033"/>
</dbReference>
<dbReference type="GeneID" id="3168576"/>
<dbReference type="KEGG" id="ttj:TTHA0210"/>
<dbReference type="PATRIC" id="fig|300852.9.peg.208"/>
<dbReference type="eggNOG" id="COG0222">
    <property type="taxonomic scope" value="Bacteria"/>
</dbReference>
<dbReference type="HOGENOM" id="CLU_086499_3_2_0"/>
<dbReference type="PhylomeDB" id="Q8VVE2"/>
<dbReference type="Proteomes" id="UP000000532">
    <property type="component" value="Chromosome"/>
</dbReference>
<dbReference type="GO" id="GO:0022625">
    <property type="term" value="C:cytosolic large ribosomal subunit"/>
    <property type="evidence" value="ECO:0007669"/>
    <property type="project" value="TreeGrafter"/>
</dbReference>
<dbReference type="GO" id="GO:0003729">
    <property type="term" value="F:mRNA binding"/>
    <property type="evidence" value="ECO:0007669"/>
    <property type="project" value="TreeGrafter"/>
</dbReference>
<dbReference type="GO" id="GO:0003735">
    <property type="term" value="F:structural constituent of ribosome"/>
    <property type="evidence" value="ECO:0007669"/>
    <property type="project" value="InterPro"/>
</dbReference>
<dbReference type="GO" id="GO:0006412">
    <property type="term" value="P:translation"/>
    <property type="evidence" value="ECO:0007669"/>
    <property type="project" value="UniProtKB-UniRule"/>
</dbReference>
<dbReference type="CDD" id="cd00387">
    <property type="entry name" value="Ribosomal_L7_L12"/>
    <property type="match status" value="1"/>
</dbReference>
<dbReference type="FunFam" id="3.30.1390.10:FF:000001">
    <property type="entry name" value="50S ribosomal protein L7/L12"/>
    <property type="match status" value="1"/>
</dbReference>
<dbReference type="Gene3D" id="3.30.1390.10">
    <property type="match status" value="1"/>
</dbReference>
<dbReference type="Gene3D" id="1.20.5.710">
    <property type="entry name" value="Single helix bin"/>
    <property type="match status" value="1"/>
</dbReference>
<dbReference type="HAMAP" id="MF_00368">
    <property type="entry name" value="Ribosomal_bL12"/>
    <property type="match status" value="1"/>
</dbReference>
<dbReference type="InterPro" id="IPR000206">
    <property type="entry name" value="Ribosomal_bL12"/>
</dbReference>
<dbReference type="InterPro" id="IPR013823">
    <property type="entry name" value="Ribosomal_bL12_C"/>
</dbReference>
<dbReference type="InterPro" id="IPR014719">
    <property type="entry name" value="Ribosomal_bL12_C/ClpS-like"/>
</dbReference>
<dbReference type="InterPro" id="IPR008932">
    <property type="entry name" value="Ribosomal_bL12_oligo"/>
</dbReference>
<dbReference type="InterPro" id="IPR036235">
    <property type="entry name" value="Ribosomal_bL12_oligo_N_sf"/>
</dbReference>
<dbReference type="NCBIfam" id="TIGR00855">
    <property type="entry name" value="L12"/>
    <property type="match status" value="1"/>
</dbReference>
<dbReference type="PANTHER" id="PTHR45987">
    <property type="entry name" value="39S RIBOSOMAL PROTEIN L12"/>
    <property type="match status" value="1"/>
</dbReference>
<dbReference type="PANTHER" id="PTHR45987:SF4">
    <property type="entry name" value="LARGE RIBOSOMAL SUBUNIT PROTEIN BL12M"/>
    <property type="match status" value="1"/>
</dbReference>
<dbReference type="Pfam" id="PF00542">
    <property type="entry name" value="Ribosomal_L12"/>
    <property type="match status" value="1"/>
</dbReference>
<dbReference type="Pfam" id="PF16320">
    <property type="entry name" value="Ribosomal_L12_N"/>
    <property type="match status" value="1"/>
</dbReference>
<dbReference type="SUPFAM" id="SSF54736">
    <property type="entry name" value="ClpS-like"/>
    <property type="match status" value="1"/>
</dbReference>
<dbReference type="SUPFAM" id="SSF48300">
    <property type="entry name" value="Ribosomal protein L7/12, oligomerisation (N-terminal) domain"/>
    <property type="match status" value="1"/>
</dbReference>